<proteinExistence type="inferred from homology"/>
<name>KTI7_ARATH</name>
<accession>Q9M8Y9</accession>
<keyword id="KW-1015">Disulfide bond</keyword>
<keyword id="KW-0325">Glycoprotein</keyword>
<keyword id="KW-0646">Protease inhibitor</keyword>
<keyword id="KW-1185">Reference proteome</keyword>
<keyword id="KW-0722">Serine protease inhibitor</keyword>
<keyword id="KW-0732">Signal</keyword>
<gene>
    <name evidence="5" type="primary">KTI7</name>
    <name evidence="7" type="ordered locus">At3g04330</name>
    <name evidence="8" type="ORF">T6K12.5</name>
</gene>
<dbReference type="EMBL" id="AC016829">
    <property type="protein sequence ID" value="AAF26781.1"/>
    <property type="molecule type" value="Genomic_DNA"/>
</dbReference>
<dbReference type="EMBL" id="CP002686">
    <property type="protein sequence ID" value="AEE74067.1"/>
    <property type="molecule type" value="Genomic_DNA"/>
</dbReference>
<dbReference type="RefSeq" id="NP_187083.1">
    <property type="nucleotide sequence ID" value="NM_111304.2"/>
</dbReference>
<dbReference type="SMR" id="Q9M8Y9"/>
<dbReference type="STRING" id="3702.Q9M8Y9"/>
<dbReference type="MEROPS" id="I03.017"/>
<dbReference type="GlyCosmos" id="Q9M8Y9">
    <property type="glycosylation" value="4 sites, No reported glycans"/>
</dbReference>
<dbReference type="GlyGen" id="Q9M8Y9">
    <property type="glycosylation" value="5 sites"/>
</dbReference>
<dbReference type="PaxDb" id="3702-AT3G04330.1"/>
<dbReference type="EnsemblPlants" id="AT3G04330.1">
    <property type="protein sequence ID" value="AT3G04330.1"/>
    <property type="gene ID" value="AT3G04330"/>
</dbReference>
<dbReference type="GeneID" id="819588"/>
<dbReference type="Gramene" id="AT3G04330.1">
    <property type="protein sequence ID" value="AT3G04330.1"/>
    <property type="gene ID" value="AT3G04330"/>
</dbReference>
<dbReference type="KEGG" id="ath:AT3G04330"/>
<dbReference type="Araport" id="AT3G04330"/>
<dbReference type="TAIR" id="AT3G04330"/>
<dbReference type="HOGENOM" id="CLU_1350546_0_0_1"/>
<dbReference type="InParanoid" id="Q9M8Y9"/>
<dbReference type="OMA" id="EMEVLFY"/>
<dbReference type="OrthoDB" id="1025750at2759"/>
<dbReference type="PhylomeDB" id="Q9M8Y9"/>
<dbReference type="PRO" id="PR:Q9M8Y9"/>
<dbReference type="Proteomes" id="UP000006548">
    <property type="component" value="Chromosome 3"/>
</dbReference>
<dbReference type="ExpressionAtlas" id="Q9M8Y9">
    <property type="expression patterns" value="baseline and differential"/>
</dbReference>
<dbReference type="GO" id="GO:0004867">
    <property type="term" value="F:serine-type endopeptidase inhibitor activity"/>
    <property type="evidence" value="ECO:0007669"/>
    <property type="project" value="UniProtKB-KW"/>
</dbReference>
<dbReference type="CDD" id="cd23369">
    <property type="entry name" value="beta-trefoil_STI_AtKTI6-like"/>
    <property type="match status" value="1"/>
</dbReference>
<dbReference type="Gene3D" id="2.80.10.50">
    <property type="match status" value="1"/>
</dbReference>
<dbReference type="InterPro" id="IPR011065">
    <property type="entry name" value="Kunitz_inhibitor_STI-like_sf"/>
</dbReference>
<dbReference type="InterPro" id="IPR002160">
    <property type="entry name" value="Prot_inh_Kunz-lg"/>
</dbReference>
<dbReference type="PANTHER" id="PTHR33107">
    <property type="entry name" value="KUNITZ TRYPSIN INHIBITOR 2"/>
    <property type="match status" value="1"/>
</dbReference>
<dbReference type="PANTHER" id="PTHR33107:SF35">
    <property type="entry name" value="KUNITZ TRYPSIN INHIBITOR 6-RELATED"/>
    <property type="match status" value="1"/>
</dbReference>
<dbReference type="Pfam" id="PF00197">
    <property type="entry name" value="Kunitz_legume"/>
    <property type="match status" value="1"/>
</dbReference>
<dbReference type="SMART" id="SM00452">
    <property type="entry name" value="STI"/>
    <property type="match status" value="1"/>
</dbReference>
<dbReference type="SUPFAM" id="SSF50386">
    <property type="entry name" value="STI-like"/>
    <property type="match status" value="1"/>
</dbReference>
<dbReference type="PROSITE" id="PS00283">
    <property type="entry name" value="SOYBEAN_KUNITZ"/>
    <property type="match status" value="1"/>
</dbReference>
<sequence>MKTFRSMLISLLLVAITTTSGVVEGNYVVYDGEGDQVKPNVPYYISFMTSDYNMWICRKKWRSNDPNSCPQQPLMVTHPNMAAPTPVMFVLSNKSETVVRESAKLKIKFVDPRPCGESGFWRVVQRTSSEGEVVLNGSESTSDNASTFAIEQTNEYYKFTFGDGPDYLTTISLSNDYPIYRLLSKKFSGEMEIYFYKNLTMG</sequence>
<evidence type="ECO:0000250" key="1">
    <source>
        <dbReference type="UniProtKB" id="P01070"/>
    </source>
</evidence>
<evidence type="ECO:0000250" key="2">
    <source>
        <dbReference type="UniProtKB" id="Q8RXD5"/>
    </source>
</evidence>
<evidence type="ECO:0000255" key="3"/>
<evidence type="ECO:0000255" key="4">
    <source>
        <dbReference type="PROSITE-ProRule" id="PRU00498"/>
    </source>
</evidence>
<evidence type="ECO:0000303" key="5">
    <source>
    </source>
</evidence>
<evidence type="ECO:0000305" key="6"/>
<evidence type="ECO:0000312" key="7">
    <source>
        <dbReference type="Araport" id="AT3G04330"/>
    </source>
</evidence>
<evidence type="ECO:0000312" key="8">
    <source>
        <dbReference type="EMBL" id="AAF26781.1"/>
    </source>
</evidence>
<protein>
    <recommendedName>
        <fullName evidence="5">Kunitz trypsin inhibitor 7</fullName>
        <shortName evidence="5">AtKTI7</shortName>
    </recommendedName>
</protein>
<feature type="signal peptide" evidence="3">
    <location>
        <begin position="1"/>
        <end position="25"/>
    </location>
</feature>
<feature type="chain" id="PRO_5015099902" description="Kunitz trypsin inhibitor 7">
    <location>
        <begin position="26"/>
        <end position="202"/>
    </location>
</feature>
<feature type="glycosylation site" description="N-linked (GlcNAc...) asparagine" evidence="4">
    <location>
        <position position="93"/>
    </location>
</feature>
<feature type="glycosylation site" description="N-linked (GlcNAc...) asparagine" evidence="4">
    <location>
        <position position="136"/>
    </location>
</feature>
<feature type="glycosylation site" description="N-linked (GlcNAc...) asparagine" evidence="4">
    <location>
        <position position="144"/>
    </location>
</feature>
<feature type="glycosylation site" description="N-linked (GlcNAc...) asparagine" evidence="4">
    <location>
        <position position="198"/>
    </location>
</feature>
<feature type="disulfide bond" evidence="1">
    <location>
        <begin position="69"/>
        <end position="115"/>
    </location>
</feature>
<comment type="function">
    <text evidence="2">Exhibits Kunitz trypsin protease inhibitor activity.</text>
</comment>
<comment type="similarity">
    <text evidence="6">Belongs to the protease inhibitor I3 (leguminous Kunitz-type inhibitor) family.</text>
</comment>
<reference key="1">
    <citation type="journal article" date="2000" name="Nature">
        <title>Sequence and analysis of chromosome 3 of the plant Arabidopsis thaliana.</title>
        <authorList>
            <person name="Salanoubat M."/>
            <person name="Lemcke K."/>
            <person name="Rieger M."/>
            <person name="Ansorge W."/>
            <person name="Unseld M."/>
            <person name="Fartmann B."/>
            <person name="Valle G."/>
            <person name="Bloecker H."/>
            <person name="Perez-Alonso M."/>
            <person name="Obermaier B."/>
            <person name="Delseny M."/>
            <person name="Boutry M."/>
            <person name="Grivell L.A."/>
            <person name="Mache R."/>
            <person name="Puigdomenech P."/>
            <person name="De Simone V."/>
            <person name="Choisne N."/>
            <person name="Artiguenave F."/>
            <person name="Robert C."/>
            <person name="Brottier P."/>
            <person name="Wincker P."/>
            <person name="Cattolico L."/>
            <person name="Weissenbach J."/>
            <person name="Saurin W."/>
            <person name="Quetier F."/>
            <person name="Schaefer M."/>
            <person name="Mueller-Auer S."/>
            <person name="Gabel C."/>
            <person name="Fuchs M."/>
            <person name="Benes V."/>
            <person name="Wurmbach E."/>
            <person name="Drzonek H."/>
            <person name="Erfle H."/>
            <person name="Jordan N."/>
            <person name="Bangert S."/>
            <person name="Wiedelmann R."/>
            <person name="Kranz H."/>
            <person name="Voss H."/>
            <person name="Holland R."/>
            <person name="Brandt P."/>
            <person name="Nyakatura G."/>
            <person name="Vezzi A."/>
            <person name="D'Angelo M."/>
            <person name="Pallavicini A."/>
            <person name="Toppo S."/>
            <person name="Simionati B."/>
            <person name="Conrad A."/>
            <person name="Hornischer K."/>
            <person name="Kauer G."/>
            <person name="Loehnert T.-H."/>
            <person name="Nordsiek G."/>
            <person name="Reichelt J."/>
            <person name="Scharfe M."/>
            <person name="Schoen O."/>
            <person name="Bargues M."/>
            <person name="Terol J."/>
            <person name="Climent J."/>
            <person name="Navarro P."/>
            <person name="Collado C."/>
            <person name="Perez-Perez A."/>
            <person name="Ottenwaelder B."/>
            <person name="Duchemin D."/>
            <person name="Cooke R."/>
            <person name="Laudie M."/>
            <person name="Berger-Llauro C."/>
            <person name="Purnelle B."/>
            <person name="Masuy D."/>
            <person name="de Haan M."/>
            <person name="Maarse A.C."/>
            <person name="Alcaraz J.-P."/>
            <person name="Cottet A."/>
            <person name="Casacuberta E."/>
            <person name="Monfort A."/>
            <person name="Argiriou A."/>
            <person name="Flores M."/>
            <person name="Liguori R."/>
            <person name="Vitale D."/>
            <person name="Mannhaupt G."/>
            <person name="Haase D."/>
            <person name="Schoof H."/>
            <person name="Rudd S."/>
            <person name="Zaccaria P."/>
            <person name="Mewes H.-W."/>
            <person name="Mayer K.F.X."/>
            <person name="Kaul S."/>
            <person name="Town C.D."/>
            <person name="Koo H.L."/>
            <person name="Tallon L.J."/>
            <person name="Jenkins J."/>
            <person name="Rooney T."/>
            <person name="Rizzo M."/>
            <person name="Walts A."/>
            <person name="Utterback T."/>
            <person name="Fujii C.Y."/>
            <person name="Shea T.P."/>
            <person name="Creasy T.H."/>
            <person name="Haas B."/>
            <person name="Maiti R."/>
            <person name="Wu D."/>
            <person name="Peterson J."/>
            <person name="Van Aken S."/>
            <person name="Pai G."/>
            <person name="Militscher J."/>
            <person name="Sellers P."/>
            <person name="Gill J.E."/>
            <person name="Feldblyum T.V."/>
            <person name="Preuss D."/>
            <person name="Lin X."/>
            <person name="Nierman W.C."/>
            <person name="Salzberg S.L."/>
            <person name="White O."/>
            <person name="Venter J.C."/>
            <person name="Fraser C.M."/>
            <person name="Kaneko T."/>
            <person name="Nakamura Y."/>
            <person name="Sato S."/>
            <person name="Kato T."/>
            <person name="Asamizu E."/>
            <person name="Sasamoto S."/>
            <person name="Kimura T."/>
            <person name="Idesawa K."/>
            <person name="Kawashima K."/>
            <person name="Kishida Y."/>
            <person name="Kiyokawa C."/>
            <person name="Kohara M."/>
            <person name="Matsumoto M."/>
            <person name="Matsuno A."/>
            <person name="Muraki A."/>
            <person name="Nakayama S."/>
            <person name="Nakazaki N."/>
            <person name="Shinpo S."/>
            <person name="Takeuchi C."/>
            <person name="Wada T."/>
            <person name="Watanabe A."/>
            <person name="Yamada M."/>
            <person name="Yasuda M."/>
            <person name="Tabata S."/>
        </authorList>
    </citation>
    <scope>NUCLEOTIDE SEQUENCE [LARGE SCALE GENOMIC DNA]</scope>
    <source>
        <strain>cv. Columbia</strain>
    </source>
</reference>
<reference key="2">
    <citation type="journal article" date="2017" name="Plant J.">
        <title>Araport11: a complete reannotation of the Arabidopsis thaliana reference genome.</title>
        <authorList>
            <person name="Cheng C.Y."/>
            <person name="Krishnakumar V."/>
            <person name="Chan A.P."/>
            <person name="Thibaud-Nissen F."/>
            <person name="Schobel S."/>
            <person name="Town C.D."/>
        </authorList>
    </citation>
    <scope>GENOME REANNOTATION</scope>
    <source>
        <strain>cv. Columbia</strain>
    </source>
</reference>
<reference key="3">
    <citation type="journal article" date="2018" name="Front. Plant Sci.">
        <title>Arabidopsis Kunitz trypsin inhibitors in defense against spider mites.</title>
        <authorList>
            <person name="Arnaiz A."/>
            <person name="Talavera-Mateo L."/>
            <person name="Gonzalez-Melendi P."/>
            <person name="Martinez M."/>
            <person name="Diaz I."/>
            <person name="Santamaria M.E."/>
        </authorList>
    </citation>
    <scope>GENE FAMILY</scope>
    <scope>NOMENCLATURE</scope>
</reference>
<organism>
    <name type="scientific">Arabidopsis thaliana</name>
    <name type="common">Mouse-ear cress</name>
    <dbReference type="NCBI Taxonomy" id="3702"/>
    <lineage>
        <taxon>Eukaryota</taxon>
        <taxon>Viridiplantae</taxon>
        <taxon>Streptophyta</taxon>
        <taxon>Embryophyta</taxon>
        <taxon>Tracheophyta</taxon>
        <taxon>Spermatophyta</taxon>
        <taxon>Magnoliopsida</taxon>
        <taxon>eudicotyledons</taxon>
        <taxon>Gunneridae</taxon>
        <taxon>Pentapetalae</taxon>
        <taxon>rosids</taxon>
        <taxon>malvids</taxon>
        <taxon>Brassicales</taxon>
        <taxon>Brassicaceae</taxon>
        <taxon>Camelineae</taxon>
        <taxon>Arabidopsis</taxon>
    </lineage>
</organism>